<feature type="chain" id="PRO_0000095267" description="Adenylosuccinate synthetase">
    <location>
        <begin position="1"/>
        <end position="458"/>
    </location>
</feature>
<feature type="active site" description="Proton acceptor" evidence="1">
    <location>
        <position position="12"/>
    </location>
</feature>
<feature type="active site" description="Proton donor" evidence="1">
    <location>
        <position position="40"/>
    </location>
</feature>
<feature type="binding site" evidence="1">
    <location>
        <begin position="11"/>
        <end position="17"/>
    </location>
    <ligand>
        <name>GTP</name>
        <dbReference type="ChEBI" id="CHEBI:37565"/>
    </ligand>
</feature>
<feature type="binding site" description="in other chain" evidence="1">
    <location>
        <begin position="12"/>
        <end position="15"/>
    </location>
    <ligand>
        <name>IMP</name>
        <dbReference type="ChEBI" id="CHEBI:58053"/>
        <note>ligand shared between dimeric partners</note>
    </ligand>
</feature>
<feature type="binding site" evidence="1">
    <location>
        <position position="12"/>
    </location>
    <ligand>
        <name>Mg(2+)</name>
        <dbReference type="ChEBI" id="CHEBI:18420"/>
    </ligand>
</feature>
<feature type="binding site" description="in other chain" evidence="1">
    <location>
        <begin position="37"/>
        <end position="40"/>
    </location>
    <ligand>
        <name>IMP</name>
        <dbReference type="ChEBI" id="CHEBI:58053"/>
        <note>ligand shared between dimeric partners</note>
    </ligand>
</feature>
<feature type="binding site" evidence="1">
    <location>
        <begin position="39"/>
        <end position="41"/>
    </location>
    <ligand>
        <name>GTP</name>
        <dbReference type="ChEBI" id="CHEBI:37565"/>
    </ligand>
</feature>
<feature type="binding site" evidence="1">
    <location>
        <position position="39"/>
    </location>
    <ligand>
        <name>Mg(2+)</name>
        <dbReference type="ChEBI" id="CHEBI:18420"/>
    </ligand>
</feature>
<feature type="binding site" description="in other chain" evidence="1">
    <location>
        <position position="127"/>
    </location>
    <ligand>
        <name>IMP</name>
        <dbReference type="ChEBI" id="CHEBI:58053"/>
        <note>ligand shared between dimeric partners</note>
    </ligand>
</feature>
<feature type="binding site" evidence="1">
    <location>
        <position position="141"/>
    </location>
    <ligand>
        <name>IMP</name>
        <dbReference type="ChEBI" id="CHEBI:58053"/>
        <note>ligand shared between dimeric partners</note>
    </ligand>
</feature>
<feature type="binding site" description="in other chain" evidence="1">
    <location>
        <position position="232"/>
    </location>
    <ligand>
        <name>IMP</name>
        <dbReference type="ChEBI" id="CHEBI:58053"/>
        <note>ligand shared between dimeric partners</note>
    </ligand>
</feature>
<feature type="binding site" description="in other chain" evidence="1">
    <location>
        <position position="247"/>
    </location>
    <ligand>
        <name>IMP</name>
        <dbReference type="ChEBI" id="CHEBI:58053"/>
        <note>ligand shared between dimeric partners</note>
    </ligand>
</feature>
<feature type="binding site" evidence="1">
    <location>
        <begin position="326"/>
        <end position="332"/>
    </location>
    <ligand>
        <name>substrate</name>
    </ligand>
</feature>
<feature type="binding site" description="in other chain" evidence="1">
    <location>
        <position position="330"/>
    </location>
    <ligand>
        <name>IMP</name>
        <dbReference type="ChEBI" id="CHEBI:58053"/>
        <note>ligand shared between dimeric partners</note>
    </ligand>
</feature>
<feature type="binding site" evidence="1">
    <location>
        <position position="332"/>
    </location>
    <ligand>
        <name>GTP</name>
        <dbReference type="ChEBI" id="CHEBI:37565"/>
    </ligand>
</feature>
<feature type="binding site" evidence="1">
    <location>
        <begin position="358"/>
        <end position="360"/>
    </location>
    <ligand>
        <name>GTP</name>
        <dbReference type="ChEBI" id="CHEBI:37565"/>
    </ligand>
</feature>
<feature type="binding site" evidence="1">
    <location>
        <begin position="443"/>
        <end position="445"/>
    </location>
    <ligand>
        <name>GTP</name>
        <dbReference type="ChEBI" id="CHEBI:37565"/>
    </ligand>
</feature>
<organism>
    <name type="scientific">Haloarcula marismortui (strain ATCC 43049 / DSM 3752 / JCM 8966 / VKM B-1809)</name>
    <name type="common">Halobacterium marismortui</name>
    <dbReference type="NCBI Taxonomy" id="272569"/>
    <lineage>
        <taxon>Archaea</taxon>
        <taxon>Methanobacteriati</taxon>
        <taxon>Methanobacteriota</taxon>
        <taxon>Stenosarchaea group</taxon>
        <taxon>Halobacteria</taxon>
        <taxon>Halobacteriales</taxon>
        <taxon>Haloarculaceae</taxon>
        <taxon>Haloarcula</taxon>
    </lineage>
</organism>
<gene>
    <name evidence="1" type="primary">purA</name>
    <name type="ordered locus">rrnAC1283</name>
</gene>
<accession>Q5V2N1</accession>
<sequence>MTVTIVGSQLGDEGKGGIVDLYGDDVDVVARYQGGDNAGHTVVHEGEEYKLSLVPSGAIRGKVGVLGNGCVVNPRTLFDEIDTLQERGLDPDVRIAERAHVILPFHRVLDGIEEELKSETDDEVGTTGRGIGPTYEDKAGRRGVRVGDLLDPDVLRERLEYVVPQKRAVVEDVYDLDVDELDDPDAFDVDAIFEEFREFGRRFEAEDMTVNAGAFLSATIDEGQNVMLEGAQGTIIDIDHGNYPYVTSSNPTAGGAATGTGLSPGVVGDGEVIGIVKAYLTRVGSGPLPTELGGVVGDTPGYDEQGEGENEELANYIREEGGEYGTVTGRPRRVGWLDLPMLRHSTRVSGFTGIAINHLDVLAGLDEVKVGHTYTLDGEELASMPATTEQWAKCEANFRSFDGWPEVDWADAAEEGYDALPENAKAYVEYIESELDTPAYAIGVGPGRGETIVREQPF</sequence>
<reference key="1">
    <citation type="journal article" date="2004" name="Genome Res.">
        <title>Genome sequence of Haloarcula marismortui: a halophilic archaeon from the Dead Sea.</title>
        <authorList>
            <person name="Baliga N.S."/>
            <person name="Bonneau R."/>
            <person name="Facciotti M.T."/>
            <person name="Pan M."/>
            <person name="Glusman G."/>
            <person name="Deutsch E.W."/>
            <person name="Shannon P."/>
            <person name="Chiu Y."/>
            <person name="Weng R.S."/>
            <person name="Gan R.R."/>
            <person name="Hung P."/>
            <person name="Date S.V."/>
            <person name="Marcotte E."/>
            <person name="Hood L."/>
            <person name="Ng W.V."/>
        </authorList>
    </citation>
    <scope>NUCLEOTIDE SEQUENCE [LARGE SCALE GENOMIC DNA]</scope>
    <source>
        <strain>ATCC 43049 / DSM 3752 / JCM 8966 / VKM B-1809</strain>
    </source>
</reference>
<evidence type="ECO:0000255" key="1">
    <source>
        <dbReference type="HAMAP-Rule" id="MF_00011"/>
    </source>
</evidence>
<name>PURA_HALMA</name>
<protein>
    <recommendedName>
        <fullName evidence="1">Adenylosuccinate synthetase</fullName>
        <shortName evidence="1">AMPSase</shortName>
        <shortName evidence="1">AdSS</shortName>
        <ecNumber evidence="1">6.3.4.4</ecNumber>
    </recommendedName>
    <alternativeName>
        <fullName evidence="1">IMP--aspartate ligase</fullName>
    </alternativeName>
</protein>
<keyword id="KW-0963">Cytoplasm</keyword>
<keyword id="KW-0342">GTP-binding</keyword>
<keyword id="KW-0436">Ligase</keyword>
<keyword id="KW-0460">Magnesium</keyword>
<keyword id="KW-0479">Metal-binding</keyword>
<keyword id="KW-0547">Nucleotide-binding</keyword>
<keyword id="KW-0658">Purine biosynthesis</keyword>
<keyword id="KW-1185">Reference proteome</keyword>
<comment type="function">
    <text evidence="1">Plays an important role in the de novo pathway of purine nucleotide biosynthesis. Catalyzes the first committed step in the biosynthesis of AMP from IMP.</text>
</comment>
<comment type="catalytic activity">
    <reaction evidence="1">
        <text>IMP + L-aspartate + GTP = N(6)-(1,2-dicarboxyethyl)-AMP + GDP + phosphate + 2 H(+)</text>
        <dbReference type="Rhea" id="RHEA:15753"/>
        <dbReference type="ChEBI" id="CHEBI:15378"/>
        <dbReference type="ChEBI" id="CHEBI:29991"/>
        <dbReference type="ChEBI" id="CHEBI:37565"/>
        <dbReference type="ChEBI" id="CHEBI:43474"/>
        <dbReference type="ChEBI" id="CHEBI:57567"/>
        <dbReference type="ChEBI" id="CHEBI:58053"/>
        <dbReference type="ChEBI" id="CHEBI:58189"/>
        <dbReference type="EC" id="6.3.4.4"/>
    </reaction>
</comment>
<comment type="cofactor">
    <cofactor evidence="1">
        <name>Mg(2+)</name>
        <dbReference type="ChEBI" id="CHEBI:18420"/>
    </cofactor>
    <text evidence="1">Binds 1 Mg(2+) ion per subunit.</text>
</comment>
<comment type="pathway">
    <text evidence="1">Purine metabolism; AMP biosynthesis via de novo pathway; AMP from IMP: step 1/2.</text>
</comment>
<comment type="subunit">
    <text evidence="1">Homodimer.</text>
</comment>
<comment type="subcellular location">
    <subcellularLocation>
        <location evidence="1">Cytoplasm</location>
    </subcellularLocation>
</comment>
<comment type="similarity">
    <text evidence="1">Belongs to the adenylosuccinate synthetase family.</text>
</comment>
<dbReference type="EC" id="6.3.4.4" evidence="1"/>
<dbReference type="EMBL" id="AY596297">
    <property type="protein sequence ID" value="AAV46221.1"/>
    <property type="molecule type" value="Genomic_DNA"/>
</dbReference>
<dbReference type="RefSeq" id="WP_004956714.1">
    <property type="nucleotide sequence ID" value="NZ_CP039138.1"/>
</dbReference>
<dbReference type="SMR" id="Q5V2N1"/>
<dbReference type="STRING" id="272569.rrnAC1283"/>
<dbReference type="PaxDb" id="272569-rrnAC1283"/>
<dbReference type="EnsemblBacteria" id="AAV46221">
    <property type="protein sequence ID" value="AAV46221"/>
    <property type="gene ID" value="rrnAC1283"/>
</dbReference>
<dbReference type="KEGG" id="hma:rrnAC1283"/>
<dbReference type="PATRIC" id="fig|272569.17.peg.1987"/>
<dbReference type="eggNOG" id="arCOG04387">
    <property type="taxonomic scope" value="Archaea"/>
</dbReference>
<dbReference type="HOGENOM" id="CLU_029848_0_2_2"/>
<dbReference type="UniPathway" id="UPA00075">
    <property type="reaction ID" value="UER00335"/>
</dbReference>
<dbReference type="Proteomes" id="UP000001169">
    <property type="component" value="Chromosome I"/>
</dbReference>
<dbReference type="GO" id="GO:0005737">
    <property type="term" value="C:cytoplasm"/>
    <property type="evidence" value="ECO:0007669"/>
    <property type="project" value="UniProtKB-SubCell"/>
</dbReference>
<dbReference type="GO" id="GO:0004019">
    <property type="term" value="F:adenylosuccinate synthase activity"/>
    <property type="evidence" value="ECO:0007669"/>
    <property type="project" value="UniProtKB-UniRule"/>
</dbReference>
<dbReference type="GO" id="GO:0005525">
    <property type="term" value="F:GTP binding"/>
    <property type="evidence" value="ECO:0007669"/>
    <property type="project" value="UniProtKB-UniRule"/>
</dbReference>
<dbReference type="GO" id="GO:0000287">
    <property type="term" value="F:magnesium ion binding"/>
    <property type="evidence" value="ECO:0007669"/>
    <property type="project" value="UniProtKB-UniRule"/>
</dbReference>
<dbReference type="GO" id="GO:0044208">
    <property type="term" value="P:'de novo' AMP biosynthetic process"/>
    <property type="evidence" value="ECO:0007669"/>
    <property type="project" value="UniProtKB-UniRule"/>
</dbReference>
<dbReference type="GO" id="GO:0046040">
    <property type="term" value="P:IMP metabolic process"/>
    <property type="evidence" value="ECO:0007669"/>
    <property type="project" value="TreeGrafter"/>
</dbReference>
<dbReference type="CDD" id="cd03108">
    <property type="entry name" value="AdSS"/>
    <property type="match status" value="1"/>
</dbReference>
<dbReference type="FunFam" id="1.10.300.10:FF:000001">
    <property type="entry name" value="Adenylosuccinate synthetase"/>
    <property type="match status" value="1"/>
</dbReference>
<dbReference type="FunFam" id="3.90.170.10:FF:000001">
    <property type="entry name" value="Adenylosuccinate synthetase"/>
    <property type="match status" value="1"/>
</dbReference>
<dbReference type="Gene3D" id="3.40.440.10">
    <property type="entry name" value="Adenylosuccinate Synthetase, subunit A, domain 1"/>
    <property type="match status" value="1"/>
</dbReference>
<dbReference type="Gene3D" id="1.10.300.10">
    <property type="entry name" value="Adenylosuccinate Synthetase, subunit A, domain 2"/>
    <property type="match status" value="1"/>
</dbReference>
<dbReference type="Gene3D" id="3.90.170.10">
    <property type="entry name" value="Adenylosuccinate Synthetase, subunit A, domain 3"/>
    <property type="match status" value="1"/>
</dbReference>
<dbReference type="HAMAP" id="MF_00011">
    <property type="entry name" value="Adenylosucc_synth"/>
    <property type="match status" value="1"/>
</dbReference>
<dbReference type="InterPro" id="IPR018220">
    <property type="entry name" value="Adenylosuccin_syn_GTP-bd"/>
</dbReference>
<dbReference type="InterPro" id="IPR033128">
    <property type="entry name" value="Adenylosuccin_syn_Lys_AS"/>
</dbReference>
<dbReference type="InterPro" id="IPR042109">
    <property type="entry name" value="Adenylosuccinate_synth_dom1"/>
</dbReference>
<dbReference type="InterPro" id="IPR042110">
    <property type="entry name" value="Adenylosuccinate_synth_dom2"/>
</dbReference>
<dbReference type="InterPro" id="IPR042111">
    <property type="entry name" value="Adenylosuccinate_synth_dom3"/>
</dbReference>
<dbReference type="InterPro" id="IPR001114">
    <property type="entry name" value="Adenylosuccinate_synthetase"/>
</dbReference>
<dbReference type="InterPro" id="IPR027417">
    <property type="entry name" value="P-loop_NTPase"/>
</dbReference>
<dbReference type="NCBIfam" id="NF002223">
    <property type="entry name" value="PRK01117.1"/>
    <property type="match status" value="1"/>
</dbReference>
<dbReference type="NCBIfam" id="NF010357">
    <property type="entry name" value="PRK13785.1"/>
    <property type="match status" value="1"/>
</dbReference>
<dbReference type="NCBIfam" id="TIGR00184">
    <property type="entry name" value="purA"/>
    <property type="match status" value="1"/>
</dbReference>
<dbReference type="PANTHER" id="PTHR11846">
    <property type="entry name" value="ADENYLOSUCCINATE SYNTHETASE"/>
    <property type="match status" value="1"/>
</dbReference>
<dbReference type="PANTHER" id="PTHR11846:SF0">
    <property type="entry name" value="ADENYLOSUCCINATE SYNTHETASE"/>
    <property type="match status" value="1"/>
</dbReference>
<dbReference type="Pfam" id="PF00709">
    <property type="entry name" value="Adenylsucc_synt"/>
    <property type="match status" value="1"/>
</dbReference>
<dbReference type="SMART" id="SM00788">
    <property type="entry name" value="Adenylsucc_synt"/>
    <property type="match status" value="1"/>
</dbReference>
<dbReference type="SUPFAM" id="SSF52540">
    <property type="entry name" value="P-loop containing nucleoside triphosphate hydrolases"/>
    <property type="match status" value="1"/>
</dbReference>
<dbReference type="PROSITE" id="PS01266">
    <property type="entry name" value="ADENYLOSUCCIN_SYN_1"/>
    <property type="match status" value="1"/>
</dbReference>
<dbReference type="PROSITE" id="PS00513">
    <property type="entry name" value="ADENYLOSUCCIN_SYN_2"/>
    <property type="match status" value="1"/>
</dbReference>
<proteinExistence type="inferred from homology"/>